<reference key="1">
    <citation type="journal article" date="2005" name="Science">
        <title>The transcriptional landscape of the mammalian genome.</title>
        <authorList>
            <person name="Carninci P."/>
            <person name="Kasukawa T."/>
            <person name="Katayama S."/>
            <person name="Gough J."/>
            <person name="Frith M.C."/>
            <person name="Maeda N."/>
            <person name="Oyama R."/>
            <person name="Ravasi T."/>
            <person name="Lenhard B."/>
            <person name="Wells C."/>
            <person name="Kodzius R."/>
            <person name="Shimokawa K."/>
            <person name="Bajic V.B."/>
            <person name="Brenner S.E."/>
            <person name="Batalov S."/>
            <person name="Forrest A.R."/>
            <person name="Zavolan M."/>
            <person name="Davis M.J."/>
            <person name="Wilming L.G."/>
            <person name="Aidinis V."/>
            <person name="Allen J.E."/>
            <person name="Ambesi-Impiombato A."/>
            <person name="Apweiler R."/>
            <person name="Aturaliya R.N."/>
            <person name="Bailey T.L."/>
            <person name="Bansal M."/>
            <person name="Baxter L."/>
            <person name="Beisel K.W."/>
            <person name="Bersano T."/>
            <person name="Bono H."/>
            <person name="Chalk A.M."/>
            <person name="Chiu K.P."/>
            <person name="Choudhary V."/>
            <person name="Christoffels A."/>
            <person name="Clutterbuck D.R."/>
            <person name="Crowe M.L."/>
            <person name="Dalla E."/>
            <person name="Dalrymple B.P."/>
            <person name="de Bono B."/>
            <person name="Della Gatta G."/>
            <person name="di Bernardo D."/>
            <person name="Down T."/>
            <person name="Engstrom P."/>
            <person name="Fagiolini M."/>
            <person name="Faulkner G."/>
            <person name="Fletcher C.F."/>
            <person name="Fukushima T."/>
            <person name="Furuno M."/>
            <person name="Futaki S."/>
            <person name="Gariboldi M."/>
            <person name="Georgii-Hemming P."/>
            <person name="Gingeras T.R."/>
            <person name="Gojobori T."/>
            <person name="Green R.E."/>
            <person name="Gustincich S."/>
            <person name="Harbers M."/>
            <person name="Hayashi Y."/>
            <person name="Hensch T.K."/>
            <person name="Hirokawa N."/>
            <person name="Hill D."/>
            <person name="Huminiecki L."/>
            <person name="Iacono M."/>
            <person name="Ikeo K."/>
            <person name="Iwama A."/>
            <person name="Ishikawa T."/>
            <person name="Jakt M."/>
            <person name="Kanapin A."/>
            <person name="Katoh M."/>
            <person name="Kawasawa Y."/>
            <person name="Kelso J."/>
            <person name="Kitamura H."/>
            <person name="Kitano H."/>
            <person name="Kollias G."/>
            <person name="Krishnan S.P."/>
            <person name="Kruger A."/>
            <person name="Kummerfeld S.K."/>
            <person name="Kurochkin I.V."/>
            <person name="Lareau L.F."/>
            <person name="Lazarevic D."/>
            <person name="Lipovich L."/>
            <person name="Liu J."/>
            <person name="Liuni S."/>
            <person name="McWilliam S."/>
            <person name="Madan Babu M."/>
            <person name="Madera M."/>
            <person name="Marchionni L."/>
            <person name="Matsuda H."/>
            <person name="Matsuzawa S."/>
            <person name="Miki H."/>
            <person name="Mignone F."/>
            <person name="Miyake S."/>
            <person name="Morris K."/>
            <person name="Mottagui-Tabar S."/>
            <person name="Mulder N."/>
            <person name="Nakano N."/>
            <person name="Nakauchi H."/>
            <person name="Ng P."/>
            <person name="Nilsson R."/>
            <person name="Nishiguchi S."/>
            <person name="Nishikawa S."/>
            <person name="Nori F."/>
            <person name="Ohara O."/>
            <person name="Okazaki Y."/>
            <person name="Orlando V."/>
            <person name="Pang K.C."/>
            <person name="Pavan W.J."/>
            <person name="Pavesi G."/>
            <person name="Pesole G."/>
            <person name="Petrovsky N."/>
            <person name="Piazza S."/>
            <person name="Reed J."/>
            <person name="Reid J.F."/>
            <person name="Ring B.Z."/>
            <person name="Ringwald M."/>
            <person name="Rost B."/>
            <person name="Ruan Y."/>
            <person name="Salzberg S.L."/>
            <person name="Sandelin A."/>
            <person name="Schneider C."/>
            <person name="Schoenbach C."/>
            <person name="Sekiguchi K."/>
            <person name="Semple C.A."/>
            <person name="Seno S."/>
            <person name="Sessa L."/>
            <person name="Sheng Y."/>
            <person name="Shibata Y."/>
            <person name="Shimada H."/>
            <person name="Shimada K."/>
            <person name="Silva D."/>
            <person name="Sinclair B."/>
            <person name="Sperling S."/>
            <person name="Stupka E."/>
            <person name="Sugiura K."/>
            <person name="Sultana R."/>
            <person name="Takenaka Y."/>
            <person name="Taki K."/>
            <person name="Tammoja K."/>
            <person name="Tan S.L."/>
            <person name="Tang S."/>
            <person name="Taylor M.S."/>
            <person name="Tegner J."/>
            <person name="Teichmann S.A."/>
            <person name="Ueda H.R."/>
            <person name="van Nimwegen E."/>
            <person name="Verardo R."/>
            <person name="Wei C.L."/>
            <person name="Yagi K."/>
            <person name="Yamanishi H."/>
            <person name="Zabarovsky E."/>
            <person name="Zhu S."/>
            <person name="Zimmer A."/>
            <person name="Hide W."/>
            <person name="Bult C."/>
            <person name="Grimmond S.M."/>
            <person name="Teasdale R.D."/>
            <person name="Liu E.T."/>
            <person name="Brusic V."/>
            <person name="Quackenbush J."/>
            <person name="Wahlestedt C."/>
            <person name="Mattick J.S."/>
            <person name="Hume D.A."/>
            <person name="Kai C."/>
            <person name="Sasaki D."/>
            <person name="Tomaru Y."/>
            <person name="Fukuda S."/>
            <person name="Kanamori-Katayama M."/>
            <person name="Suzuki M."/>
            <person name="Aoki J."/>
            <person name="Arakawa T."/>
            <person name="Iida J."/>
            <person name="Imamura K."/>
            <person name="Itoh M."/>
            <person name="Kato T."/>
            <person name="Kawaji H."/>
            <person name="Kawagashira N."/>
            <person name="Kawashima T."/>
            <person name="Kojima M."/>
            <person name="Kondo S."/>
            <person name="Konno H."/>
            <person name="Nakano K."/>
            <person name="Ninomiya N."/>
            <person name="Nishio T."/>
            <person name="Okada M."/>
            <person name="Plessy C."/>
            <person name="Shibata K."/>
            <person name="Shiraki T."/>
            <person name="Suzuki S."/>
            <person name="Tagami M."/>
            <person name="Waki K."/>
            <person name="Watahiki A."/>
            <person name="Okamura-Oho Y."/>
            <person name="Suzuki H."/>
            <person name="Kawai J."/>
            <person name="Hayashizaki Y."/>
        </authorList>
    </citation>
    <scope>NUCLEOTIDE SEQUENCE [LARGE SCALE MRNA]</scope>
    <source>
        <strain>C57BL/6J</strain>
        <tissue>Testis</tissue>
    </source>
</reference>
<reference key="2">
    <citation type="journal article" date="2009" name="PLoS Biol.">
        <title>Lineage-specific biology revealed by a finished genome assembly of the mouse.</title>
        <authorList>
            <person name="Church D.M."/>
            <person name="Goodstadt L."/>
            <person name="Hillier L.W."/>
            <person name="Zody M.C."/>
            <person name="Goldstein S."/>
            <person name="She X."/>
            <person name="Bult C.J."/>
            <person name="Agarwala R."/>
            <person name="Cherry J.L."/>
            <person name="DiCuccio M."/>
            <person name="Hlavina W."/>
            <person name="Kapustin Y."/>
            <person name="Meric P."/>
            <person name="Maglott D."/>
            <person name="Birtle Z."/>
            <person name="Marques A.C."/>
            <person name="Graves T."/>
            <person name="Zhou S."/>
            <person name="Teague B."/>
            <person name="Potamousis K."/>
            <person name="Churas C."/>
            <person name="Place M."/>
            <person name="Herschleb J."/>
            <person name="Runnheim R."/>
            <person name="Forrest D."/>
            <person name="Amos-Landgraf J."/>
            <person name="Schwartz D.C."/>
            <person name="Cheng Z."/>
            <person name="Lindblad-Toh K."/>
            <person name="Eichler E.E."/>
            <person name="Ponting C.P."/>
        </authorList>
    </citation>
    <scope>NUCLEOTIDE SEQUENCE [LARGE SCALE GENOMIC DNA]</scope>
    <source>
        <strain>C57BL/6J</strain>
    </source>
</reference>
<reference key="3">
    <citation type="journal article" date="2022" name="Nat. Commun.">
        <title>Kastor and Polluks polypeptides encoded by a single gene locus cooperatively regulate VDAC and spermatogenesis.</title>
        <authorList>
            <person name="Mise S."/>
            <person name="Matsumoto A."/>
            <person name="Shimada K."/>
            <person name="Hosaka T."/>
            <person name="Takahashi M."/>
            <person name="Ichihara K."/>
            <person name="Shimizu H."/>
            <person name="Shiraishi C."/>
            <person name="Saito D."/>
            <person name="Suyama M."/>
            <person name="Yasuda T."/>
            <person name="Ide T."/>
            <person name="Izumi Y."/>
            <person name="Bamba T."/>
            <person name="Kimura-Someya T."/>
            <person name="Shirouzu M."/>
            <person name="Miyata H."/>
            <person name="Ikawa M."/>
            <person name="Nakayama K.I."/>
        </authorList>
    </citation>
    <scope>IDENTIFICATION OF ISOFORMS KASTOR AND POLLUKS</scope>
    <scope>TISSUE SPECIFICITY (ISOFORMS KASTOR AND POLLUKS)</scope>
    <scope>FUNCTION (ISOFORMS KASTOR AND POLLUKS)</scope>
    <scope>INTERACTION WITH VDAC3 (ISOFORMS KASTOR AND POLLUKS)</scope>
    <scope>TOPOLOGY</scope>
    <scope>MASS SPECTROMETRY</scope>
    <scope>DISRUPTION PHENOTYPE</scope>
</reference>
<protein>
    <recommendedName>
        <fullName>Mitochondrial sheath formation-associated protein</fullName>
    </recommendedName>
</protein>
<gene>
    <name evidence="6" type="primary">Misfa</name>
    <name evidence="6" type="synonym">Gm9999</name>
</gene>
<feature type="chain" id="PRO_0000457589" description="Mitochondrial sheath formation-associated protein">
    <location>
        <begin position="1"/>
        <end position="53"/>
    </location>
</feature>
<feature type="topological domain" description="Mitochondrial intermembrane" evidence="4">
    <location>
        <begin position="1"/>
        <end position="6"/>
    </location>
</feature>
<feature type="transmembrane region" description="Helical" evidence="1">
    <location>
        <begin position="7"/>
        <end position="23"/>
    </location>
</feature>
<feature type="topological domain" description="Cytoplasmic" evidence="2">
    <location>
        <begin position="24"/>
        <end position="53"/>
    </location>
</feature>
<feature type="splice variant" id="VSP_061801" description="In isoform Polluks.">
    <original>LGWMLFVGLATYMGTFPEAMPPTLKWKERLPGQENKARRRIQALEEELL</original>
    <variation>VLWMVLIAGTMWKGYKYPPGGTPLEVNKDDPGEPMQ</variation>
    <location>
        <begin position="4"/>
        <end position="52"/>
    </location>
</feature>
<feature type="topological domain" description="Mitochondrial intermembrane">
    <location sequence="Q8C5Y2-2">
        <begin position="1"/>
        <end position="7"/>
    </location>
</feature>
<feature type="transmembrane region" description="Helical" evidence="1">
    <location sequence="Q8C5Y2-2">
        <begin position="8"/>
        <end position="24"/>
    </location>
</feature>
<feature type="topological domain" description="Cytoplasmic" evidence="2">
    <location sequence="Q8C5Y2-2">
        <begin position="25"/>
        <end position="40"/>
    </location>
</feature>
<proteinExistence type="evidence at protein level"/>
<accession>Q8C5Y2</accession>
<accession>A0A0N4SVS5</accession>
<comment type="function">
    <molecule>Isoform Kastor</molecule>
    <text evidence="2">Regulates sperm development. May be involved in mitochondrial sheath formation.</text>
</comment>
<comment type="function">
    <molecule>Isoform Polluks</molecule>
    <text evidence="2">Regulates sperm development. May be involved in mitochondrial sheath formation.</text>
</comment>
<comment type="subunit">
    <molecule>Isoform Kastor</molecule>
    <text evidence="2">Interacts with VDAC3.</text>
</comment>
<comment type="subunit">
    <molecule>Isoform Polluks</molecule>
    <text evidence="2">Interacts with VDAC3.</text>
</comment>
<comment type="subcellular location">
    <molecule>Isoform Kastor</molecule>
    <subcellularLocation>
        <location evidence="2">Mitochondrion outer membrane</location>
        <topology evidence="1">Single-pass membrane protein</topology>
    </subcellularLocation>
</comment>
<comment type="subcellular location">
    <molecule>Isoform Polluks</molecule>
    <subcellularLocation>
        <location evidence="2">Mitochondrion outer membrane</location>
        <topology evidence="1">Single-pass membrane protein</topology>
    </subcellularLocation>
</comment>
<comment type="alternative products">
    <event type="alternative initiation"/>
    <isoform>
        <id>Q8C5Y2-1</id>
        <name evidence="3">Kastor</name>
        <sequence type="displayed"/>
    </isoform>
    <isoform>
        <id>Q8C5Y2-2</id>
        <name evidence="3">Polluks</name>
        <sequence type="described" ref="VSP_061801"/>
    </isoform>
</comment>
<comment type="tissue specificity">
    <molecule>Isoform Kastor</molecule>
    <text evidence="2">Testis specific. Detected only in germ cells at the step of spermiogenesis (at protein level). Expressed during the middle steps of spermatid development.</text>
</comment>
<comment type="tissue specificity">
    <molecule>Isoform Polluks</molecule>
    <text evidence="2">Testis specific. Detected only in germ cells at the step of spermiogenesis (at protein level). Expressed in the late steps of spermatid development.</text>
</comment>
<comment type="disruption phenotype">
    <molecule>Isoform Kastor</molecule>
    <text evidence="2">Knockout mice are viable and manifest no substantial differences in body weight, testis weight or size, sperm count, or testicular histology. Although Kastor-deficient male mice are fertile, the number of pups produced by wild-type females after breeding with the mutant males is significantly reduced compared with that for wild-type males. The loss of Kastor induced a a nonuniform size of mitochondria and abnormal bending in spermatozoa.</text>
</comment>
<comment type="disruption phenotype">
    <molecule>Isoform Polluks</molecule>
    <text evidence="2">Knockout mice are viable and manifest no substantial differences in body weight, testis weight or size, sperm count, or testicular histology. Although Polluks-deficient male mice are fertile, the number of pups produced by wild-type females after breeding with the mutant males is significantly reduced compared with that for wild-type males. The loss of Polluks results in irregular elongation and flattening of mitochondria without abnormal bending in spermatozoa.</text>
</comment>
<comment type="miscellaneous">
    <text evidence="5">Isoform Kastor and isoform Polluks are conserved only in mammals.</text>
</comment>
<comment type="caution">
    <text evidence="2">The locus MISFA encodes two different polypeptides Kastor and Polluks, with different transcription start sites and different ORFs.</text>
</comment>
<sequence length="53" mass="6174">MIVLGWMLFVGLATYMGTFPEAMPPTLKWKERLPGQENKARRRIQALEEELLL</sequence>
<evidence type="ECO:0000255" key="1"/>
<evidence type="ECO:0000269" key="2">
    <source>
    </source>
</evidence>
<evidence type="ECO:0000303" key="3">
    <source>
    </source>
</evidence>
<evidence type="ECO:0000305" key="4"/>
<evidence type="ECO:0000305" key="5">
    <source>
    </source>
</evidence>
<evidence type="ECO:0000312" key="6">
    <source>
        <dbReference type="MGI" id="MGI:3642801"/>
    </source>
</evidence>
<organism>
    <name type="scientific">Mus musculus</name>
    <name type="common">Mouse</name>
    <dbReference type="NCBI Taxonomy" id="10090"/>
    <lineage>
        <taxon>Eukaryota</taxon>
        <taxon>Metazoa</taxon>
        <taxon>Chordata</taxon>
        <taxon>Craniata</taxon>
        <taxon>Vertebrata</taxon>
        <taxon>Euteleostomi</taxon>
        <taxon>Mammalia</taxon>
        <taxon>Eutheria</taxon>
        <taxon>Euarchontoglires</taxon>
        <taxon>Glires</taxon>
        <taxon>Rodentia</taxon>
        <taxon>Myomorpha</taxon>
        <taxon>Muroidea</taxon>
        <taxon>Muridae</taxon>
        <taxon>Murinae</taxon>
        <taxon>Mus</taxon>
        <taxon>Mus</taxon>
    </lineage>
</organism>
<dbReference type="EMBL" id="AK076952">
    <property type="protein sequence ID" value="BAC36535.1"/>
    <property type="molecule type" value="mRNA"/>
</dbReference>
<dbReference type="EMBL" id="AC113001">
    <property type="status" value="NOT_ANNOTATED_CDS"/>
    <property type="molecule type" value="Genomic_DNA"/>
</dbReference>
<dbReference type="STRING" id="10090.ENSMUSP00000146705"/>
<dbReference type="ProteomicsDB" id="348846"/>
<dbReference type="Ensembl" id="ENSMUST00000070660.11">
    <molecule id="Q8C5Y2-1"/>
    <property type="protein sequence ID" value="ENSMUSP00000146705.2"/>
    <property type="gene ID" value="ENSMUSG00000056509.11"/>
</dbReference>
<dbReference type="Ensembl" id="ENSMUST00000185832.2">
    <molecule id="Q8C5Y2-2"/>
    <property type="protein sequence ID" value="ENSMUSP00000145226.2"/>
    <property type="gene ID" value="ENSMUSG00000056509.11"/>
</dbReference>
<dbReference type="Ensembl" id="ENSMUST00000188312.2">
    <molecule id="Q8C5Y2-1"/>
    <property type="protein sequence ID" value="ENSMUSP00000156094.2"/>
    <property type="gene ID" value="ENSMUSG00000056509.11"/>
</dbReference>
<dbReference type="AGR" id="MGI:3642801"/>
<dbReference type="MGI" id="MGI:3642801">
    <property type="gene designation" value="Misfa"/>
</dbReference>
<dbReference type="VEuPathDB" id="HostDB:ENSMUSG00000056509"/>
<dbReference type="GeneTree" id="ENSGT00970000193605"/>
<dbReference type="InParanoid" id="Q8C5Y2"/>
<dbReference type="OrthoDB" id="9442986at2759"/>
<dbReference type="ChiTaRS" id="Gm9999">
    <property type="organism name" value="mouse"/>
</dbReference>
<dbReference type="PRO" id="PR:Q8C5Y2"/>
<dbReference type="Proteomes" id="UP000000589">
    <property type="component" value="Chromosome 7"/>
</dbReference>
<dbReference type="RNAct" id="Q8C5Y2">
    <property type="molecule type" value="protein"/>
</dbReference>
<dbReference type="Bgee" id="ENSMUSG00000056509">
    <property type="expression patterns" value="Expressed in seminiferous tubule of testis and 23 other cell types or tissues"/>
</dbReference>
<dbReference type="ExpressionAtlas" id="Q8C5Y2">
    <property type="expression patterns" value="baseline and differential"/>
</dbReference>
<dbReference type="GO" id="GO:0005741">
    <property type="term" value="C:mitochondrial outer membrane"/>
    <property type="evidence" value="ECO:0000314"/>
    <property type="project" value="UniProtKB"/>
</dbReference>
<dbReference type="GO" id="GO:0030154">
    <property type="term" value="P:cell differentiation"/>
    <property type="evidence" value="ECO:0007669"/>
    <property type="project" value="UniProtKB-KW"/>
</dbReference>
<dbReference type="GO" id="GO:0120317">
    <property type="term" value="P:sperm mitochondrial sheath assembly"/>
    <property type="evidence" value="ECO:0000315"/>
    <property type="project" value="UniProtKB"/>
</dbReference>
<dbReference type="GO" id="GO:0007283">
    <property type="term" value="P:spermatogenesis"/>
    <property type="evidence" value="ECO:0000315"/>
    <property type="project" value="UniProtKB"/>
</dbReference>
<name>MISFA_MOUSE</name>
<keyword id="KW-0024">Alternative initiation</keyword>
<keyword id="KW-0221">Differentiation</keyword>
<keyword id="KW-0472">Membrane</keyword>
<keyword id="KW-0496">Mitochondrion</keyword>
<keyword id="KW-1000">Mitochondrion outer membrane</keyword>
<keyword id="KW-1185">Reference proteome</keyword>
<keyword id="KW-0744">Spermatogenesis</keyword>
<keyword id="KW-0812">Transmembrane</keyword>
<keyword id="KW-1133">Transmembrane helix</keyword>